<organism>
    <name type="scientific">Pleurastrum terricola</name>
    <name type="common">Filamentous green alga</name>
    <name type="synonym">Leptosira terrestris</name>
    <dbReference type="NCBI Taxonomy" id="34116"/>
    <lineage>
        <taxon>Eukaryota</taxon>
        <taxon>Viridiplantae</taxon>
        <taxon>Chlorophyta</taxon>
        <taxon>core chlorophytes</taxon>
        <taxon>Chlorophyceae</taxon>
        <taxon>CS clade</taxon>
        <taxon>Chlamydomonadales</taxon>
        <taxon>Pleurastraceae</taxon>
        <taxon>Pleurastrum</taxon>
    </lineage>
</organism>
<gene>
    <name type="primary">rpoB2</name>
    <name type="synonym">rpoBb</name>
</gene>
<comment type="function">
    <text evidence="1">DNA-dependent RNA polymerase catalyzes the transcription of DNA into RNA using the four ribonucleoside triphosphates as substrates.</text>
</comment>
<comment type="catalytic activity">
    <reaction>
        <text>RNA(n) + a ribonucleoside 5'-triphosphate = RNA(n+1) + diphosphate</text>
        <dbReference type="Rhea" id="RHEA:21248"/>
        <dbReference type="Rhea" id="RHEA-COMP:14527"/>
        <dbReference type="Rhea" id="RHEA-COMP:17342"/>
        <dbReference type="ChEBI" id="CHEBI:33019"/>
        <dbReference type="ChEBI" id="CHEBI:61557"/>
        <dbReference type="ChEBI" id="CHEBI:140395"/>
        <dbReference type="EC" id="2.7.7.6"/>
    </reaction>
</comment>
<comment type="subunit">
    <text evidence="1">In plastids the minimal PEP RNA polymerase catalytic core is composed of four subunits: alpha, beta, beta', and beta''. When a (nuclear-encoded) sigma factor is associated with the core the holoenzyme is formed, which can initiate transcription (By similarity).</text>
</comment>
<comment type="subcellular location">
    <subcellularLocation>
        <location>Plastid</location>
        <location>Chloroplast</location>
    </subcellularLocation>
</comment>
<comment type="miscellaneous">
    <text>In L.terrestris the gene for this protein is split in two.</text>
</comment>
<comment type="similarity">
    <text evidence="2">Belongs to the RNA polymerase beta chain family.</text>
</comment>
<reference key="1">
    <citation type="journal article" date="2007" name="BMC Genomics">
        <title>The chloroplast genome sequence of the green alga Leptosira terrestris: multiple losses of the inverted repeat and extensive genome rearrangements within the Trebouxiophyceae.</title>
        <authorList>
            <person name="de Cambiaire J.-C."/>
            <person name="Otis C."/>
            <person name="Turmel M."/>
            <person name="Lemieux C."/>
        </authorList>
    </citation>
    <scope>NUCLEOTIDE SEQUENCE [LARGE SCALE GENOMIC DNA]</scope>
    <source>
        <strain>CCAP 463/2 / UTEX 333</strain>
    </source>
</reference>
<protein>
    <recommendedName>
        <fullName>DNA-directed RNA polymerase subunit beta C-terminal section</fullName>
        <ecNumber>2.7.7.6</ecNumber>
    </recommendedName>
    <alternativeName>
        <fullName>PEP</fullName>
    </alternativeName>
    <alternativeName>
        <fullName>Plastid-encoded RNA polymerase subunit beta C-terminal section</fullName>
        <shortName>RNA polymerase subunit beta C-terminal section</shortName>
    </alternativeName>
</protein>
<name>RPOB2_PLETE</name>
<proteinExistence type="inferred from homology"/>
<accession>A6YGE0</accession>
<geneLocation type="chloroplast"/>
<sequence length="880" mass="101672">MNFQFYFLIKHNFISCKLETPLQLLLTTYVNLLKHKKNIIPLNVDKARDVYRAHENSYFLDHYIRSNQATCITQRPSVKLGEWVQKGDFLCDTTASSAGELALGKNILVAYMPWHGYNFEDAILVNETLIIYDIYTSLHLEKFEIEIENTNWGPEIIKLSDWMFSDKRDSLYGKELFTQETTKQTYVKEKQITIGVLKQAFLRRKGKLLINRRFISKIHKYEFLTNQRFVVPQFRYQQTLFQQINKNPKKQLISRSIIENSNQLSIYNKPKIRFTNNVISSKLFKPLIIFSQVTLLNILSQCHIDKSQYQPTSELLSSKLVAKEQIHELLFKQPKKTGVKIKLKHGTSHTTDFYNKDLLSNTKMRAGGENHRPGESKIYLGSKASVKFINMNFQEKKTNGYKKISLYNNKTSSQNNVNKKSFFLFLNKSILFLNKPRPKYKSTRPVNVSLNKSAFIYRRSFRTLFPYNFKNMRLSCEKLFVNNNNWLINYIKSLDVVIGGEIYRPGNKLQINLEYLNFKYGFVQKNNYDHLDNDGIIKLGTWVKPGDIIVSKLRPIGPHNPTPLEKLVAAILKKKFDDYKNAAFYTPKDVYGRIVGIEILEPKNLPSDVEYSGIGRVEFYLVDKRRIFVGDKMAGRHGNKGIISNILPKQDMPYLPDGTPVDMVLNPLGVPSRMNVGQVFETLLGLAGKYLHQHFKVTPFDEVYGPEASRSLVYSKLYEARLKTDQNWIFDPKSPGKTRIFDGQTGANFDQAVTAGYAYMLKLIHLVDHKIHARSTGPYALVTQQPVRGRSRAGGQRLGEMEFWALEAFGASYNLQEMMTIKSDDILGRTQVFDSILNSKPIQNSHPESFRVFINELRSLGVNFQSQILHQYNPNIKTKI</sequence>
<feature type="chain" id="PRO_0000308258" description="DNA-directed RNA polymerase subunit beta C-terminal section">
    <location>
        <begin position="1"/>
        <end position="880"/>
    </location>
</feature>
<evidence type="ECO:0000250" key="1"/>
<evidence type="ECO:0000305" key="2"/>
<keyword id="KW-0150">Chloroplast</keyword>
<keyword id="KW-0240">DNA-directed RNA polymerase</keyword>
<keyword id="KW-0548">Nucleotidyltransferase</keyword>
<keyword id="KW-0934">Plastid</keyword>
<keyword id="KW-0804">Transcription</keyword>
<keyword id="KW-0808">Transferase</keyword>
<dbReference type="EC" id="2.7.7.6"/>
<dbReference type="EMBL" id="EF506945">
    <property type="protein sequence ID" value="ABO69352.1"/>
    <property type="molecule type" value="Genomic_DNA"/>
</dbReference>
<dbReference type="RefSeq" id="YP_001382217.1">
    <property type="nucleotide sequence ID" value="NC_009681.1"/>
</dbReference>
<dbReference type="SMR" id="A6YGE0"/>
<dbReference type="GeneID" id="5383754"/>
<dbReference type="GO" id="GO:0009507">
    <property type="term" value="C:chloroplast"/>
    <property type="evidence" value="ECO:0007669"/>
    <property type="project" value="UniProtKB-SubCell"/>
</dbReference>
<dbReference type="GO" id="GO:0000428">
    <property type="term" value="C:DNA-directed RNA polymerase complex"/>
    <property type="evidence" value="ECO:0007669"/>
    <property type="project" value="UniProtKB-KW"/>
</dbReference>
<dbReference type="GO" id="GO:0005739">
    <property type="term" value="C:mitochondrion"/>
    <property type="evidence" value="ECO:0007669"/>
    <property type="project" value="GOC"/>
</dbReference>
<dbReference type="GO" id="GO:0003677">
    <property type="term" value="F:DNA binding"/>
    <property type="evidence" value="ECO:0007669"/>
    <property type="project" value="InterPro"/>
</dbReference>
<dbReference type="GO" id="GO:0003899">
    <property type="term" value="F:DNA-directed RNA polymerase activity"/>
    <property type="evidence" value="ECO:0007669"/>
    <property type="project" value="UniProtKB-EC"/>
</dbReference>
<dbReference type="GO" id="GO:0032549">
    <property type="term" value="F:ribonucleoside binding"/>
    <property type="evidence" value="ECO:0007669"/>
    <property type="project" value="InterPro"/>
</dbReference>
<dbReference type="GO" id="GO:0006351">
    <property type="term" value="P:DNA-templated transcription"/>
    <property type="evidence" value="ECO:0007669"/>
    <property type="project" value="InterPro"/>
</dbReference>
<dbReference type="Gene3D" id="2.40.50.100">
    <property type="match status" value="1"/>
</dbReference>
<dbReference type="Gene3D" id="2.40.50.150">
    <property type="match status" value="1"/>
</dbReference>
<dbReference type="Gene3D" id="2.40.270.10">
    <property type="entry name" value="DNA-directed RNA polymerase, subunit 2, domain 6"/>
    <property type="match status" value="2"/>
</dbReference>
<dbReference type="Gene3D" id="3.90.1800.10">
    <property type="entry name" value="RNA polymerase alpha subunit dimerisation domain"/>
    <property type="match status" value="1"/>
</dbReference>
<dbReference type="InterPro" id="IPR015712">
    <property type="entry name" value="DNA-dir_RNA_pol_su2"/>
</dbReference>
<dbReference type="InterPro" id="IPR007120">
    <property type="entry name" value="DNA-dir_RNAP_su2_dom"/>
</dbReference>
<dbReference type="InterPro" id="IPR037033">
    <property type="entry name" value="DNA-dir_RNAP_su2_hyb_sf"/>
</dbReference>
<dbReference type="InterPro" id="IPR007121">
    <property type="entry name" value="RNA_pol_bsu_CS"/>
</dbReference>
<dbReference type="InterPro" id="IPR007641">
    <property type="entry name" value="RNA_pol_Rpb2_7"/>
</dbReference>
<dbReference type="InterPro" id="IPR014724">
    <property type="entry name" value="RNA_pol_RPB2_OB-fold"/>
</dbReference>
<dbReference type="PANTHER" id="PTHR20856">
    <property type="entry name" value="DNA-DIRECTED RNA POLYMERASE I SUBUNIT 2"/>
    <property type="match status" value="1"/>
</dbReference>
<dbReference type="Pfam" id="PF00562">
    <property type="entry name" value="RNA_pol_Rpb2_6"/>
    <property type="match status" value="2"/>
</dbReference>
<dbReference type="Pfam" id="PF04560">
    <property type="entry name" value="RNA_pol_Rpb2_7"/>
    <property type="match status" value="1"/>
</dbReference>
<dbReference type="SUPFAM" id="SSF64484">
    <property type="entry name" value="beta and beta-prime subunits of DNA dependent RNA-polymerase"/>
    <property type="match status" value="2"/>
</dbReference>
<dbReference type="PROSITE" id="PS01166">
    <property type="entry name" value="RNA_POL_BETA"/>
    <property type="match status" value="1"/>
</dbReference>